<organism>
    <name type="scientific">Neurospora crassa (strain ATCC 24698 / 74-OR23-1A / CBS 708.71 / DSM 1257 / FGSC 987)</name>
    <dbReference type="NCBI Taxonomy" id="367110"/>
    <lineage>
        <taxon>Eukaryota</taxon>
        <taxon>Fungi</taxon>
        <taxon>Dikarya</taxon>
        <taxon>Ascomycota</taxon>
        <taxon>Pezizomycotina</taxon>
        <taxon>Sordariomycetes</taxon>
        <taxon>Sordariomycetidae</taxon>
        <taxon>Sordariales</taxon>
        <taxon>Sordariaceae</taxon>
        <taxon>Neurospora</taxon>
    </lineage>
</organism>
<comment type="function">
    <text evidence="3 4 5">Highly reducing polyketide synthase; part of the gene cluster that mediates the biosynthesis of sordarial, a salicylic aldehyde structurally related to the phytotoxin pyriculol (PubMed:19277664, PubMed:28485098, PubMed:30908040). The most interesting aspect of this pathway is formation of an aromatic product from the highly reducing polyketide synthase srdA (PubMed:30908040). SrdA synthesizes a reduced polyketide chain from one molecule of acetyl-CoA and five molecules of malonyl-CoA (PubMed:30908040). The polyketide chain is then reductively released as an aldehyde (PubMed:30908040). The oxidoreductases srdC, srdD and srdE then oxidize one of the hydroxy groups to facilitate the intramolecular aldol condensation, followed by dehydration to yield a salicylic aldehyde (PubMed:30908040). This aldehyde can undergo facile reduction by endogenous reductases to yield the alcohol 1-hydroxy-2-hydroxymethyl-3-pent-1,3-dienylbenzene (PubMed:30908040). The flavin-dependent srdI counteract against the propensity of the aldehydes to be reduced under physiological conditions and is responsible for reoxidizing 1-hydroxy-2-hydroxymethyl-3-pent-1,3-dienylbenzene back to the salicylic aldehyde (PubMed:30908040). This salicylic aldehyde is then selectively epoxidized by the cupin-domain-containing oxidoreductase srdB to yield the epoxide, which can be hydrolyzed stereoselectively by the hydrolase srdG to give the final product sordarial (PubMed:30908040).</text>
</comment>
<comment type="induction">
    <text evidence="3 4">Expression is up-regulated during sexual development (PubMed:19277664). Expression is also up-regulated during confrontation with the arthropod fungivore Drosophila melanogaster (PubMed:28485098).</text>
</comment>
<comment type="similarity">
    <text evidence="7">Belongs to the AB hydrolase superfamily. Epoxide hydrolase family.</text>
</comment>
<comment type="caution">
    <text evidence="4 5">A recent genetics report associated srdA and its cluster with the biosynthesis of furanocoumarin neurosporin A, a metabolite produced by N.crassa for chemoresistance against predation by arthropod fungivores (PubMed:28485098). However, based on the gene cluster organization and predicted gene functions, this cluster is unlikely to be involved in neurosporin A biosynthesis, but instead produces compounds similar to pyriculol (PubMed:30908040).</text>
</comment>
<accession>Q7SHI0</accession>
<name>SRDG_NEUCR</name>
<proteinExistence type="evidence at transcript level"/>
<evidence type="ECO:0000250" key="1">
    <source>
        <dbReference type="UniProtKB" id="P95276"/>
    </source>
</evidence>
<evidence type="ECO:0000255" key="2"/>
<evidence type="ECO:0000269" key="3">
    <source>
    </source>
</evidence>
<evidence type="ECO:0000269" key="4">
    <source>
    </source>
</evidence>
<evidence type="ECO:0000269" key="5">
    <source>
    </source>
</evidence>
<evidence type="ECO:0000303" key="6">
    <source>
    </source>
</evidence>
<evidence type="ECO:0000305" key="7"/>
<evidence type="ECO:0000305" key="8">
    <source>
    </source>
</evidence>
<dbReference type="EC" id="3.3.2.-" evidence="8"/>
<dbReference type="EMBL" id="CM002236">
    <property type="protein sequence ID" value="EAA36370.1"/>
    <property type="molecule type" value="Genomic_DNA"/>
</dbReference>
<dbReference type="RefSeq" id="XP_965606.1">
    <property type="nucleotide sequence ID" value="XM_960513.1"/>
</dbReference>
<dbReference type="SMR" id="Q7SHI0"/>
<dbReference type="STRING" id="367110.Q7SHI0"/>
<dbReference type="ESTHER" id="neucr-NCU02924.1">
    <property type="family name" value="Epoxide_hydrolase"/>
</dbReference>
<dbReference type="PaxDb" id="5141-EFNCRP00000002370"/>
<dbReference type="EnsemblFungi" id="EAA36370">
    <property type="protein sequence ID" value="EAA36370"/>
    <property type="gene ID" value="NCU02924"/>
</dbReference>
<dbReference type="GeneID" id="3881731"/>
<dbReference type="KEGG" id="ncr:NCU02924"/>
<dbReference type="VEuPathDB" id="FungiDB:NCU02924"/>
<dbReference type="HOGENOM" id="CLU_020336_7_5_1"/>
<dbReference type="InParanoid" id="Q7SHI0"/>
<dbReference type="OMA" id="CHGFPGL"/>
<dbReference type="OrthoDB" id="408373at2759"/>
<dbReference type="Proteomes" id="UP000001805">
    <property type="component" value="Chromosome 1, Linkage Group I"/>
</dbReference>
<dbReference type="GO" id="GO:0016787">
    <property type="term" value="F:hydrolase activity"/>
    <property type="evidence" value="ECO:0007669"/>
    <property type="project" value="UniProtKB-KW"/>
</dbReference>
<dbReference type="Gene3D" id="3.40.50.1820">
    <property type="entry name" value="alpha/beta hydrolase"/>
    <property type="match status" value="1"/>
</dbReference>
<dbReference type="InterPro" id="IPR000073">
    <property type="entry name" value="AB_hydrolase_1"/>
</dbReference>
<dbReference type="InterPro" id="IPR029058">
    <property type="entry name" value="AB_hydrolase_fold"/>
</dbReference>
<dbReference type="InterPro" id="IPR000639">
    <property type="entry name" value="Epox_hydrolase-like"/>
</dbReference>
<dbReference type="PANTHER" id="PTHR43329">
    <property type="entry name" value="EPOXIDE HYDROLASE"/>
    <property type="match status" value="1"/>
</dbReference>
<dbReference type="Pfam" id="PF00561">
    <property type="entry name" value="Abhydrolase_1"/>
    <property type="match status" value="1"/>
</dbReference>
<dbReference type="PRINTS" id="PR00412">
    <property type="entry name" value="EPOXHYDRLASE"/>
</dbReference>
<dbReference type="SUPFAM" id="SSF53474">
    <property type="entry name" value="alpha/beta-Hydrolases"/>
    <property type="match status" value="1"/>
</dbReference>
<keyword id="KW-0378">Hydrolase</keyword>
<keyword id="KW-1185">Reference proteome</keyword>
<reference key="1">
    <citation type="journal article" date="2003" name="Nature">
        <title>The genome sequence of the filamentous fungus Neurospora crassa.</title>
        <authorList>
            <person name="Galagan J.E."/>
            <person name="Calvo S.E."/>
            <person name="Borkovich K.A."/>
            <person name="Selker E.U."/>
            <person name="Read N.D."/>
            <person name="Jaffe D.B."/>
            <person name="FitzHugh W."/>
            <person name="Ma L.-J."/>
            <person name="Smirnov S."/>
            <person name="Purcell S."/>
            <person name="Rehman B."/>
            <person name="Elkins T."/>
            <person name="Engels R."/>
            <person name="Wang S."/>
            <person name="Nielsen C.B."/>
            <person name="Butler J."/>
            <person name="Endrizzi M."/>
            <person name="Qui D."/>
            <person name="Ianakiev P."/>
            <person name="Bell-Pedersen D."/>
            <person name="Nelson M.A."/>
            <person name="Werner-Washburne M."/>
            <person name="Selitrennikoff C.P."/>
            <person name="Kinsey J.A."/>
            <person name="Braun E.L."/>
            <person name="Zelter A."/>
            <person name="Schulte U."/>
            <person name="Kothe G.O."/>
            <person name="Jedd G."/>
            <person name="Mewes H.-W."/>
            <person name="Staben C."/>
            <person name="Marcotte E."/>
            <person name="Greenberg D."/>
            <person name="Roy A."/>
            <person name="Foley K."/>
            <person name="Naylor J."/>
            <person name="Stange-Thomann N."/>
            <person name="Barrett R."/>
            <person name="Gnerre S."/>
            <person name="Kamal M."/>
            <person name="Kamvysselis M."/>
            <person name="Mauceli E.W."/>
            <person name="Bielke C."/>
            <person name="Rudd S."/>
            <person name="Frishman D."/>
            <person name="Krystofova S."/>
            <person name="Rasmussen C."/>
            <person name="Metzenberg R.L."/>
            <person name="Perkins D.D."/>
            <person name="Kroken S."/>
            <person name="Cogoni C."/>
            <person name="Macino G."/>
            <person name="Catcheside D.E.A."/>
            <person name="Li W."/>
            <person name="Pratt R.J."/>
            <person name="Osmani S.A."/>
            <person name="DeSouza C.P.C."/>
            <person name="Glass N.L."/>
            <person name="Orbach M.J."/>
            <person name="Berglund J.A."/>
            <person name="Voelker R."/>
            <person name="Yarden O."/>
            <person name="Plamann M."/>
            <person name="Seiler S."/>
            <person name="Dunlap J.C."/>
            <person name="Radford A."/>
            <person name="Aramayo R."/>
            <person name="Natvig D.O."/>
            <person name="Alex L.A."/>
            <person name="Mannhaupt G."/>
            <person name="Ebbole D.J."/>
            <person name="Freitag M."/>
            <person name="Paulsen I."/>
            <person name="Sachs M.S."/>
            <person name="Lander E.S."/>
            <person name="Nusbaum C."/>
            <person name="Birren B.W."/>
        </authorList>
    </citation>
    <scope>NUCLEOTIDE SEQUENCE [LARGE SCALE GENOMIC DNA]</scope>
    <source>
        <strain>ATCC 24698 / 74-OR23-1A / CBS 708.71 / DSM 1257 / FGSC 987</strain>
    </source>
</reference>
<reference key="2">
    <citation type="journal article" date="2009" name="Curr. Genet.">
        <title>A novel polyketide biosynthesis gene cluster is involved in fruiting body morphogenesis in the filamentous fungi Sordaria macrospora and Neurospora crassa.</title>
        <authorList>
            <person name="Nowrousian M."/>
        </authorList>
    </citation>
    <scope>FUNCTION</scope>
    <scope>INDUCTION</scope>
</reference>
<reference key="3">
    <citation type="journal article" date="2017" name="Environ. Microbiol.">
        <title>Production of a fungal furocoumarin by a polyketide synthase gene cluster confers the chemo-resistance of Neurospora crassa to the predation by fungivorous arthropods.</title>
        <authorList>
            <person name="Zhao Y."/>
            <person name="Ding J."/>
            <person name="Yuan W."/>
            <person name="Huang J."/>
            <person name="Huang W."/>
            <person name="Wang Y."/>
            <person name="Zheng W."/>
        </authorList>
    </citation>
    <scope>FUNCTION</scope>
    <scope>INDUCTION</scope>
</reference>
<reference key="4">
    <citation type="journal article" date="2019" name="J. Nat. Prod.">
        <title>Genome mining reveals Neurospora crassa can produce the salicylaldehyde sordarial.</title>
        <authorList>
            <person name="Zhao Z."/>
            <person name="Ying Y."/>
            <person name="Hung Y.S."/>
            <person name="Tang Y."/>
        </authorList>
    </citation>
    <scope>FUNCTION</scope>
    <scope>PATHWAY</scope>
</reference>
<protein>
    <recommendedName>
        <fullName evidence="6">Epoxide hydrolase srdG</fullName>
        <ecNumber evidence="8">3.3.2.-</ecNumber>
    </recommendedName>
    <alternativeName>
        <fullName evidence="6">Sordarial biosynthesis cluster protein srdG</fullName>
    </alternativeName>
</protein>
<feature type="chain" id="PRO_0000449332" description="Epoxide hydrolase srdG">
    <location>
        <begin position="1"/>
        <end position="342"/>
    </location>
</feature>
<feature type="domain" description="AB hydrolase-1" evidence="2">
    <location>
        <begin position="44"/>
        <end position="332"/>
    </location>
</feature>
<feature type="active site" description="Nucleophile" evidence="1">
    <location>
        <position position="122"/>
    </location>
</feature>
<feature type="active site" description="Proton acceptor" evidence="1">
    <location>
        <position position="320"/>
    </location>
</feature>
<feature type="site" description="Contributes to the formation of an oxyanion binding site for the epoxide oxygen of substrate" evidence="1">
    <location>
        <position position="171"/>
    </location>
</feature>
<feature type="site" description="Contributes to the formation of an oxyanion binding site for the epoxide oxygen of substrate" evidence="1">
    <location>
        <position position="257"/>
    </location>
</feature>
<sequence>MSPDALTPHDPRVTHHYITIPSTSLTYHYLLANPDSASFPHPTATVLLLHGWPDLSLGWRYQVPFLLSLGLRVIIPDMLGYGLTSAPSSPSEYSLKNLSFHMTHIIRQVNPSGQPVLLGTHDWGAFLGWRLALYYPELIKGIFAFCIPYSPPETKVTSLEEHIERHPELGYQLQNARGEVEEAVNGGSKERLRGWLNAMFGGLAKEDGGVMAFDPWKGVDVAKLEEVGGSPLVSEEVMDFYVEEYSRNGIRGPMNWYRTREINLEDELPLAEKCENWQFQVPAMIVMVGHDPALPPELTDGMEKYFAKGLRKEVIPEASHWVLIHTPEEVNKLVGEFLQQFL</sequence>
<gene>
    <name evidence="6" type="primary">srdG</name>
    <name type="ORF">NCU02924</name>
</gene>